<dbReference type="EMBL" id="CP000576">
    <property type="protein sequence ID" value="ABO18305.1"/>
    <property type="molecule type" value="Genomic_DNA"/>
</dbReference>
<dbReference type="RefSeq" id="WP_011863602.1">
    <property type="nucleotide sequence ID" value="NC_009091.1"/>
</dbReference>
<dbReference type="SMR" id="A3PEY0"/>
<dbReference type="STRING" id="167546.P9301_16821"/>
<dbReference type="KEGG" id="pmg:P9301_16821"/>
<dbReference type="eggNOG" id="COG0779">
    <property type="taxonomic scope" value="Bacteria"/>
</dbReference>
<dbReference type="HOGENOM" id="CLU_070525_2_1_3"/>
<dbReference type="OrthoDB" id="9805006at2"/>
<dbReference type="Proteomes" id="UP000001430">
    <property type="component" value="Chromosome"/>
</dbReference>
<dbReference type="GO" id="GO:0005829">
    <property type="term" value="C:cytosol"/>
    <property type="evidence" value="ECO:0007669"/>
    <property type="project" value="TreeGrafter"/>
</dbReference>
<dbReference type="GO" id="GO:0000028">
    <property type="term" value="P:ribosomal small subunit assembly"/>
    <property type="evidence" value="ECO:0007669"/>
    <property type="project" value="TreeGrafter"/>
</dbReference>
<dbReference type="GO" id="GO:0006412">
    <property type="term" value="P:translation"/>
    <property type="evidence" value="ECO:0007669"/>
    <property type="project" value="TreeGrafter"/>
</dbReference>
<dbReference type="Gene3D" id="3.30.300.70">
    <property type="entry name" value="RimP-like superfamily, N-terminal"/>
    <property type="match status" value="1"/>
</dbReference>
<dbReference type="HAMAP" id="MF_01077">
    <property type="entry name" value="RimP"/>
    <property type="match status" value="1"/>
</dbReference>
<dbReference type="InterPro" id="IPR003728">
    <property type="entry name" value="Ribosome_maturation_RimP"/>
</dbReference>
<dbReference type="InterPro" id="IPR036847">
    <property type="entry name" value="RimP_C_sf"/>
</dbReference>
<dbReference type="InterPro" id="IPR028989">
    <property type="entry name" value="RimP_N"/>
</dbReference>
<dbReference type="InterPro" id="IPR035956">
    <property type="entry name" value="RimP_N_sf"/>
</dbReference>
<dbReference type="NCBIfam" id="NF011240">
    <property type="entry name" value="PRK14646.1"/>
    <property type="match status" value="1"/>
</dbReference>
<dbReference type="PANTHER" id="PTHR33867">
    <property type="entry name" value="RIBOSOME MATURATION FACTOR RIMP"/>
    <property type="match status" value="1"/>
</dbReference>
<dbReference type="PANTHER" id="PTHR33867:SF1">
    <property type="entry name" value="RIBOSOME MATURATION FACTOR RIMP"/>
    <property type="match status" value="1"/>
</dbReference>
<dbReference type="Pfam" id="PF02576">
    <property type="entry name" value="RimP_N"/>
    <property type="match status" value="1"/>
</dbReference>
<dbReference type="SUPFAM" id="SSF74942">
    <property type="entry name" value="YhbC-like, C-terminal domain"/>
    <property type="match status" value="1"/>
</dbReference>
<dbReference type="SUPFAM" id="SSF75420">
    <property type="entry name" value="YhbC-like, N-terminal domain"/>
    <property type="match status" value="1"/>
</dbReference>
<reference key="1">
    <citation type="journal article" date="2007" name="PLoS Genet.">
        <title>Patterns and implications of gene gain and loss in the evolution of Prochlorococcus.</title>
        <authorList>
            <person name="Kettler G.C."/>
            <person name="Martiny A.C."/>
            <person name="Huang K."/>
            <person name="Zucker J."/>
            <person name="Coleman M.L."/>
            <person name="Rodrigue S."/>
            <person name="Chen F."/>
            <person name="Lapidus A."/>
            <person name="Ferriera S."/>
            <person name="Johnson J."/>
            <person name="Steglich C."/>
            <person name="Church G.M."/>
            <person name="Richardson P."/>
            <person name="Chisholm S.W."/>
        </authorList>
    </citation>
    <scope>NUCLEOTIDE SEQUENCE [LARGE SCALE GENOMIC DNA]</scope>
    <source>
        <strain>MIT 9301</strain>
    </source>
</reference>
<keyword id="KW-0963">Cytoplasm</keyword>
<keyword id="KW-1185">Reference proteome</keyword>
<keyword id="KW-0690">Ribosome biogenesis</keyword>
<proteinExistence type="inferred from homology"/>
<protein>
    <recommendedName>
        <fullName evidence="1">Ribosome maturation factor RimP</fullName>
    </recommendedName>
</protein>
<accession>A3PEY0</accession>
<feature type="chain" id="PRO_1000064742" description="Ribosome maturation factor RimP">
    <location>
        <begin position="1"/>
        <end position="155"/>
    </location>
</feature>
<name>RIMP_PROM0</name>
<gene>
    <name evidence="1" type="primary">rimP</name>
    <name type="ordered locus">P9301_16821</name>
</gene>
<organism>
    <name type="scientific">Prochlorococcus marinus (strain MIT 9301)</name>
    <dbReference type="NCBI Taxonomy" id="167546"/>
    <lineage>
        <taxon>Bacteria</taxon>
        <taxon>Bacillati</taxon>
        <taxon>Cyanobacteriota</taxon>
        <taxon>Cyanophyceae</taxon>
        <taxon>Synechococcales</taxon>
        <taxon>Prochlorococcaceae</taxon>
        <taxon>Prochlorococcus</taxon>
    </lineage>
</organism>
<evidence type="ECO:0000255" key="1">
    <source>
        <dbReference type="HAMAP-Rule" id="MF_01077"/>
    </source>
</evidence>
<comment type="function">
    <text evidence="1">Required for maturation of 30S ribosomal subunits.</text>
</comment>
<comment type="subcellular location">
    <subcellularLocation>
        <location evidence="1">Cytoplasm</location>
    </subcellularLocation>
</comment>
<comment type="similarity">
    <text evidence="1">Belongs to the RimP family.</text>
</comment>
<sequence>MNKENKSKLEKLLENVANKQDLEIYSLNIQTNQNPIVIEIIIKKTNGNDVSLDDCALFNTPASDEIEKSNLLNCSYVLEISSQGVSDELTSERDFKTFKGFPVNVELNQKNSKIKFLNGLLYEKSNDYLAINIKGRIKKIPFDEVLKISLCTLKD</sequence>